<comment type="function">
    <text evidence="1">NDH-1 shuttles electrons from NADH, via FMN and iron-sulfur (Fe-S) centers, to quinones in the respiratory chain. The immediate electron acceptor for the enzyme in this species is believed to be ubiquinone. Couples the redox reaction to proton translocation (for every two electrons transferred, four hydrogen ions are translocated across the cytoplasmic membrane), and thus conserves the redox energy in a proton gradient.</text>
</comment>
<comment type="catalytic activity">
    <reaction evidence="1">
        <text>a quinone + NADH + 5 H(+)(in) = a quinol + NAD(+) + 4 H(+)(out)</text>
        <dbReference type="Rhea" id="RHEA:57888"/>
        <dbReference type="ChEBI" id="CHEBI:15378"/>
        <dbReference type="ChEBI" id="CHEBI:24646"/>
        <dbReference type="ChEBI" id="CHEBI:57540"/>
        <dbReference type="ChEBI" id="CHEBI:57945"/>
        <dbReference type="ChEBI" id="CHEBI:132124"/>
    </reaction>
</comment>
<comment type="subunit">
    <text evidence="1">NDH-1 is composed of 14 different subunits. Subunits NuoB, C, D, E, F, and G constitute the peripheral sector of the complex.</text>
</comment>
<comment type="subcellular location">
    <subcellularLocation>
        <location evidence="1">Cell inner membrane</location>
        <topology evidence="1">Peripheral membrane protein</topology>
        <orientation evidence="1">Cytoplasmic side</orientation>
    </subcellularLocation>
</comment>
<comment type="similarity">
    <text evidence="1">Belongs to the complex I 49 kDa subunit family.</text>
</comment>
<name>NUOD_XANP2</name>
<proteinExistence type="inferred from homology"/>
<organism>
    <name type="scientific">Xanthobacter autotrophicus (strain ATCC BAA-1158 / Py2)</name>
    <dbReference type="NCBI Taxonomy" id="78245"/>
    <lineage>
        <taxon>Bacteria</taxon>
        <taxon>Pseudomonadati</taxon>
        <taxon>Pseudomonadota</taxon>
        <taxon>Alphaproteobacteria</taxon>
        <taxon>Hyphomicrobiales</taxon>
        <taxon>Xanthobacteraceae</taxon>
        <taxon>Xanthobacter</taxon>
    </lineage>
</organism>
<accession>A7IPA4</accession>
<sequence length="402" mass="45211">MVDIADEMKPADKVRNFQINFGPQHPAAHGVLRLVLELDGEVVERVDPHIGLLHRGTEKLIEAKTYLQAVPYFDRLDYCAPMNQEHAFCLAAEKLLGIEVPKRGQLIRVLYSEIGRLLSHLLNVTTFAMDVGALTPPLWGFEEREKLMIFYERASGSRMHAAYFRPGGVHQDLPRALVEDIGAFCDPFLKLLDDLDGLVTENRIFKQRTVDIGVVSLEDALAWGFSGVMVRGSGAAWDLRRAQPYECYSELDFDIPIGKHGDCYDRYVVRMEEMRQSTKIMKQCVERLLKEAGPVSTTDNKIVPPKRGEMKRSMEALIHHFKLYTEGFHVPAGDVYAAVEAPKGEFGVYLVSDGTNKPYRCKIRAPGFAHLQAMDFLCRGHMLADVSAVLGSLDIVFGEVDR</sequence>
<protein>
    <recommendedName>
        <fullName evidence="1">NADH-quinone oxidoreductase subunit D</fullName>
        <ecNumber evidence="1">7.1.1.-</ecNumber>
    </recommendedName>
    <alternativeName>
        <fullName evidence="1">NADH dehydrogenase I subunit D</fullName>
    </alternativeName>
    <alternativeName>
        <fullName evidence="1">NDH-1 subunit D</fullName>
    </alternativeName>
</protein>
<keyword id="KW-0997">Cell inner membrane</keyword>
<keyword id="KW-1003">Cell membrane</keyword>
<keyword id="KW-0472">Membrane</keyword>
<keyword id="KW-0520">NAD</keyword>
<keyword id="KW-0874">Quinone</keyword>
<keyword id="KW-1185">Reference proteome</keyword>
<keyword id="KW-1278">Translocase</keyword>
<keyword id="KW-0813">Transport</keyword>
<keyword id="KW-0830">Ubiquinone</keyword>
<gene>
    <name evidence="1" type="primary">nuoD</name>
    <name type="ordered locus">Xaut_4630</name>
</gene>
<dbReference type="EC" id="7.1.1.-" evidence="1"/>
<dbReference type="EMBL" id="CP000781">
    <property type="protein sequence ID" value="ABS69850.1"/>
    <property type="molecule type" value="Genomic_DNA"/>
</dbReference>
<dbReference type="SMR" id="A7IPA4"/>
<dbReference type="STRING" id="78245.Xaut_4630"/>
<dbReference type="KEGG" id="xau:Xaut_4630"/>
<dbReference type="eggNOG" id="COG0649">
    <property type="taxonomic scope" value="Bacteria"/>
</dbReference>
<dbReference type="HOGENOM" id="CLU_015134_1_1_5"/>
<dbReference type="PhylomeDB" id="A7IPA4"/>
<dbReference type="Proteomes" id="UP000002417">
    <property type="component" value="Chromosome"/>
</dbReference>
<dbReference type="GO" id="GO:0005886">
    <property type="term" value="C:plasma membrane"/>
    <property type="evidence" value="ECO:0007669"/>
    <property type="project" value="UniProtKB-SubCell"/>
</dbReference>
<dbReference type="GO" id="GO:0051287">
    <property type="term" value="F:NAD binding"/>
    <property type="evidence" value="ECO:0007669"/>
    <property type="project" value="InterPro"/>
</dbReference>
<dbReference type="GO" id="GO:0050136">
    <property type="term" value="F:NADH:ubiquinone reductase (non-electrogenic) activity"/>
    <property type="evidence" value="ECO:0007669"/>
    <property type="project" value="UniProtKB-UniRule"/>
</dbReference>
<dbReference type="GO" id="GO:0048038">
    <property type="term" value="F:quinone binding"/>
    <property type="evidence" value="ECO:0007669"/>
    <property type="project" value="UniProtKB-KW"/>
</dbReference>
<dbReference type="FunFam" id="1.10.645.10:FF:000005">
    <property type="entry name" value="NADH-quinone oxidoreductase subunit D"/>
    <property type="match status" value="1"/>
</dbReference>
<dbReference type="Gene3D" id="1.10.645.10">
    <property type="entry name" value="Cytochrome-c3 Hydrogenase, chain B"/>
    <property type="match status" value="1"/>
</dbReference>
<dbReference type="HAMAP" id="MF_01358">
    <property type="entry name" value="NDH1_NuoD"/>
    <property type="match status" value="1"/>
</dbReference>
<dbReference type="InterPro" id="IPR001135">
    <property type="entry name" value="NADH_Q_OxRdtase_suD"/>
</dbReference>
<dbReference type="InterPro" id="IPR014029">
    <property type="entry name" value="NADH_UbQ_OxRdtase_49kDa_CS"/>
</dbReference>
<dbReference type="InterPro" id="IPR022885">
    <property type="entry name" value="NDH1_su_D/H"/>
</dbReference>
<dbReference type="InterPro" id="IPR029014">
    <property type="entry name" value="NiFe-Hase_large"/>
</dbReference>
<dbReference type="NCBIfam" id="TIGR01962">
    <property type="entry name" value="NuoD"/>
    <property type="match status" value="1"/>
</dbReference>
<dbReference type="NCBIfam" id="NF004739">
    <property type="entry name" value="PRK06075.1"/>
    <property type="match status" value="1"/>
</dbReference>
<dbReference type="PANTHER" id="PTHR11993:SF10">
    <property type="entry name" value="NADH DEHYDROGENASE [UBIQUINONE] IRON-SULFUR PROTEIN 2, MITOCHONDRIAL"/>
    <property type="match status" value="1"/>
</dbReference>
<dbReference type="PANTHER" id="PTHR11993">
    <property type="entry name" value="NADH-UBIQUINONE OXIDOREDUCTASE 49 KDA SUBUNIT"/>
    <property type="match status" value="1"/>
</dbReference>
<dbReference type="Pfam" id="PF00346">
    <property type="entry name" value="Complex1_49kDa"/>
    <property type="match status" value="1"/>
</dbReference>
<dbReference type="SUPFAM" id="SSF56762">
    <property type="entry name" value="HydB/Nqo4-like"/>
    <property type="match status" value="1"/>
</dbReference>
<dbReference type="PROSITE" id="PS00535">
    <property type="entry name" value="COMPLEX1_49K"/>
    <property type="match status" value="1"/>
</dbReference>
<reference key="1">
    <citation type="submission" date="2007-07" db="EMBL/GenBank/DDBJ databases">
        <title>Complete sequence of chromosome of Xanthobacter autotrophicus Py2.</title>
        <authorList>
            <consortium name="US DOE Joint Genome Institute"/>
            <person name="Copeland A."/>
            <person name="Lucas S."/>
            <person name="Lapidus A."/>
            <person name="Barry K."/>
            <person name="Glavina del Rio T."/>
            <person name="Hammon N."/>
            <person name="Israni S."/>
            <person name="Dalin E."/>
            <person name="Tice H."/>
            <person name="Pitluck S."/>
            <person name="Sims D."/>
            <person name="Brettin T."/>
            <person name="Bruce D."/>
            <person name="Detter J.C."/>
            <person name="Han C."/>
            <person name="Tapia R."/>
            <person name="Brainard J."/>
            <person name="Schmutz J."/>
            <person name="Larimer F."/>
            <person name="Land M."/>
            <person name="Hauser L."/>
            <person name="Kyrpides N."/>
            <person name="Kim E."/>
            <person name="Ensigns S.A."/>
            <person name="Richardson P."/>
        </authorList>
    </citation>
    <scope>NUCLEOTIDE SEQUENCE [LARGE SCALE GENOMIC DNA]</scope>
    <source>
        <strain>ATCC BAA-1158 / Py2</strain>
    </source>
</reference>
<evidence type="ECO:0000255" key="1">
    <source>
        <dbReference type="HAMAP-Rule" id="MF_01358"/>
    </source>
</evidence>
<feature type="chain" id="PRO_0000357954" description="NADH-quinone oxidoreductase subunit D">
    <location>
        <begin position="1"/>
        <end position="402"/>
    </location>
</feature>